<feature type="chain" id="PRO_1000080650" description="Ketol-acid reductoisomerase (NADP(+))">
    <location>
        <begin position="1"/>
        <end position="340"/>
    </location>
</feature>
<feature type="domain" description="KARI N-terminal Rossmann" evidence="2">
    <location>
        <begin position="3"/>
        <end position="182"/>
    </location>
</feature>
<feature type="domain" description="KARI C-terminal knotted" evidence="3">
    <location>
        <begin position="183"/>
        <end position="328"/>
    </location>
</feature>
<feature type="active site" evidence="1">
    <location>
        <position position="108"/>
    </location>
</feature>
<feature type="binding site" evidence="1">
    <location>
        <begin position="26"/>
        <end position="29"/>
    </location>
    <ligand>
        <name>NADP(+)</name>
        <dbReference type="ChEBI" id="CHEBI:58349"/>
    </ligand>
</feature>
<feature type="binding site" evidence="1">
    <location>
        <position position="49"/>
    </location>
    <ligand>
        <name>NADP(+)</name>
        <dbReference type="ChEBI" id="CHEBI:58349"/>
    </ligand>
</feature>
<feature type="binding site" evidence="1">
    <location>
        <position position="53"/>
    </location>
    <ligand>
        <name>NADP(+)</name>
        <dbReference type="ChEBI" id="CHEBI:58349"/>
    </ligand>
</feature>
<feature type="binding site" evidence="1">
    <location>
        <begin position="83"/>
        <end position="86"/>
    </location>
    <ligand>
        <name>NADP(+)</name>
        <dbReference type="ChEBI" id="CHEBI:58349"/>
    </ligand>
</feature>
<feature type="binding site" evidence="1">
    <location>
        <position position="134"/>
    </location>
    <ligand>
        <name>NADP(+)</name>
        <dbReference type="ChEBI" id="CHEBI:58349"/>
    </ligand>
</feature>
<feature type="binding site" evidence="1">
    <location>
        <position position="191"/>
    </location>
    <ligand>
        <name>Mg(2+)</name>
        <dbReference type="ChEBI" id="CHEBI:18420"/>
        <label>1</label>
    </ligand>
</feature>
<feature type="binding site" evidence="1">
    <location>
        <position position="191"/>
    </location>
    <ligand>
        <name>Mg(2+)</name>
        <dbReference type="ChEBI" id="CHEBI:18420"/>
        <label>2</label>
    </ligand>
</feature>
<feature type="binding site" evidence="1">
    <location>
        <position position="195"/>
    </location>
    <ligand>
        <name>Mg(2+)</name>
        <dbReference type="ChEBI" id="CHEBI:18420"/>
        <label>1</label>
    </ligand>
</feature>
<feature type="binding site" evidence="1">
    <location>
        <position position="227"/>
    </location>
    <ligand>
        <name>Mg(2+)</name>
        <dbReference type="ChEBI" id="CHEBI:18420"/>
        <label>2</label>
    </ligand>
</feature>
<feature type="binding site" evidence="1">
    <location>
        <position position="231"/>
    </location>
    <ligand>
        <name>Mg(2+)</name>
        <dbReference type="ChEBI" id="CHEBI:18420"/>
        <label>2</label>
    </ligand>
</feature>
<feature type="binding site" evidence="1">
    <location>
        <position position="252"/>
    </location>
    <ligand>
        <name>substrate</name>
    </ligand>
</feature>
<gene>
    <name evidence="1" type="primary">ilvC</name>
    <name type="ordered locus">SGO_0528</name>
</gene>
<comment type="function">
    <text evidence="1">Involved in the biosynthesis of branched-chain amino acids (BCAA). Catalyzes an alkyl-migration followed by a ketol-acid reduction of (S)-2-acetolactate (S2AL) to yield (R)-2,3-dihydroxy-isovalerate. In the isomerase reaction, S2AL is rearranged via a Mg-dependent methyl migration to produce 3-hydroxy-3-methyl-2-ketobutyrate (HMKB). In the reductase reaction, this 2-ketoacid undergoes a metal-dependent reduction by NADPH to yield (R)-2,3-dihydroxy-isovalerate.</text>
</comment>
<comment type="catalytic activity">
    <reaction evidence="1">
        <text>(2R)-2,3-dihydroxy-3-methylbutanoate + NADP(+) = (2S)-2-acetolactate + NADPH + H(+)</text>
        <dbReference type="Rhea" id="RHEA:22068"/>
        <dbReference type="ChEBI" id="CHEBI:15378"/>
        <dbReference type="ChEBI" id="CHEBI:49072"/>
        <dbReference type="ChEBI" id="CHEBI:57783"/>
        <dbReference type="ChEBI" id="CHEBI:58349"/>
        <dbReference type="ChEBI" id="CHEBI:58476"/>
        <dbReference type="EC" id="1.1.1.86"/>
    </reaction>
</comment>
<comment type="catalytic activity">
    <reaction evidence="1">
        <text>(2R,3R)-2,3-dihydroxy-3-methylpentanoate + NADP(+) = (S)-2-ethyl-2-hydroxy-3-oxobutanoate + NADPH + H(+)</text>
        <dbReference type="Rhea" id="RHEA:13493"/>
        <dbReference type="ChEBI" id="CHEBI:15378"/>
        <dbReference type="ChEBI" id="CHEBI:49256"/>
        <dbReference type="ChEBI" id="CHEBI:49258"/>
        <dbReference type="ChEBI" id="CHEBI:57783"/>
        <dbReference type="ChEBI" id="CHEBI:58349"/>
        <dbReference type="EC" id="1.1.1.86"/>
    </reaction>
</comment>
<comment type="cofactor">
    <cofactor evidence="1">
        <name>Mg(2+)</name>
        <dbReference type="ChEBI" id="CHEBI:18420"/>
    </cofactor>
    <text evidence="1">Binds 2 magnesium ions per subunit.</text>
</comment>
<comment type="pathway">
    <text evidence="1">Amino-acid biosynthesis; L-isoleucine biosynthesis; L-isoleucine from 2-oxobutanoate: step 2/4.</text>
</comment>
<comment type="pathway">
    <text evidence="1">Amino-acid biosynthesis; L-valine biosynthesis; L-valine from pyruvate: step 2/4.</text>
</comment>
<comment type="similarity">
    <text evidence="1">Belongs to the ketol-acid reductoisomerase family.</text>
</comment>
<evidence type="ECO:0000255" key="1">
    <source>
        <dbReference type="HAMAP-Rule" id="MF_00435"/>
    </source>
</evidence>
<evidence type="ECO:0000255" key="2">
    <source>
        <dbReference type="PROSITE-ProRule" id="PRU01197"/>
    </source>
</evidence>
<evidence type="ECO:0000255" key="3">
    <source>
        <dbReference type="PROSITE-ProRule" id="PRU01198"/>
    </source>
</evidence>
<dbReference type="EC" id="1.1.1.86" evidence="1"/>
<dbReference type="EMBL" id="CP000725">
    <property type="protein sequence ID" value="ABV10370.1"/>
    <property type="molecule type" value="Genomic_DNA"/>
</dbReference>
<dbReference type="RefSeq" id="WP_008808531.1">
    <property type="nucleotide sequence ID" value="NC_009785.1"/>
</dbReference>
<dbReference type="SMR" id="A8AVN4"/>
<dbReference type="STRING" id="467705.SGO_0528"/>
<dbReference type="GeneID" id="93788317"/>
<dbReference type="KEGG" id="sgo:SGO_0528"/>
<dbReference type="eggNOG" id="COG0059">
    <property type="taxonomic scope" value="Bacteria"/>
</dbReference>
<dbReference type="HOGENOM" id="CLU_033821_0_1_9"/>
<dbReference type="UniPathway" id="UPA00047">
    <property type="reaction ID" value="UER00056"/>
</dbReference>
<dbReference type="UniPathway" id="UPA00049">
    <property type="reaction ID" value="UER00060"/>
</dbReference>
<dbReference type="Proteomes" id="UP000001131">
    <property type="component" value="Chromosome"/>
</dbReference>
<dbReference type="GO" id="GO:0005829">
    <property type="term" value="C:cytosol"/>
    <property type="evidence" value="ECO:0007669"/>
    <property type="project" value="TreeGrafter"/>
</dbReference>
<dbReference type="GO" id="GO:0004455">
    <property type="term" value="F:ketol-acid reductoisomerase activity"/>
    <property type="evidence" value="ECO:0007669"/>
    <property type="project" value="UniProtKB-UniRule"/>
</dbReference>
<dbReference type="GO" id="GO:0000287">
    <property type="term" value="F:magnesium ion binding"/>
    <property type="evidence" value="ECO:0007669"/>
    <property type="project" value="UniProtKB-UniRule"/>
</dbReference>
<dbReference type="GO" id="GO:0050661">
    <property type="term" value="F:NADP binding"/>
    <property type="evidence" value="ECO:0007669"/>
    <property type="project" value="InterPro"/>
</dbReference>
<dbReference type="GO" id="GO:0009097">
    <property type="term" value="P:isoleucine biosynthetic process"/>
    <property type="evidence" value="ECO:0007669"/>
    <property type="project" value="UniProtKB-UniRule"/>
</dbReference>
<dbReference type="GO" id="GO:0009099">
    <property type="term" value="P:L-valine biosynthetic process"/>
    <property type="evidence" value="ECO:0007669"/>
    <property type="project" value="UniProtKB-UniRule"/>
</dbReference>
<dbReference type="FunFam" id="3.40.50.720:FF:000023">
    <property type="entry name" value="Ketol-acid reductoisomerase (NADP(+))"/>
    <property type="match status" value="1"/>
</dbReference>
<dbReference type="Gene3D" id="6.10.240.10">
    <property type="match status" value="1"/>
</dbReference>
<dbReference type="Gene3D" id="3.40.50.720">
    <property type="entry name" value="NAD(P)-binding Rossmann-like Domain"/>
    <property type="match status" value="1"/>
</dbReference>
<dbReference type="HAMAP" id="MF_00435">
    <property type="entry name" value="IlvC"/>
    <property type="match status" value="1"/>
</dbReference>
<dbReference type="InterPro" id="IPR008927">
    <property type="entry name" value="6-PGluconate_DH-like_C_sf"/>
</dbReference>
<dbReference type="InterPro" id="IPR013023">
    <property type="entry name" value="KARI"/>
</dbReference>
<dbReference type="InterPro" id="IPR000506">
    <property type="entry name" value="KARI_C"/>
</dbReference>
<dbReference type="InterPro" id="IPR013116">
    <property type="entry name" value="KARI_N"/>
</dbReference>
<dbReference type="InterPro" id="IPR014359">
    <property type="entry name" value="KARI_prok"/>
</dbReference>
<dbReference type="InterPro" id="IPR036291">
    <property type="entry name" value="NAD(P)-bd_dom_sf"/>
</dbReference>
<dbReference type="NCBIfam" id="TIGR00465">
    <property type="entry name" value="ilvC"/>
    <property type="match status" value="1"/>
</dbReference>
<dbReference type="NCBIfam" id="NF004017">
    <property type="entry name" value="PRK05479.1"/>
    <property type="match status" value="1"/>
</dbReference>
<dbReference type="NCBIfam" id="NF009940">
    <property type="entry name" value="PRK13403.1"/>
    <property type="match status" value="1"/>
</dbReference>
<dbReference type="PANTHER" id="PTHR21371">
    <property type="entry name" value="KETOL-ACID REDUCTOISOMERASE, MITOCHONDRIAL"/>
    <property type="match status" value="1"/>
</dbReference>
<dbReference type="PANTHER" id="PTHR21371:SF1">
    <property type="entry name" value="KETOL-ACID REDUCTOISOMERASE, MITOCHONDRIAL"/>
    <property type="match status" value="1"/>
</dbReference>
<dbReference type="Pfam" id="PF01450">
    <property type="entry name" value="KARI_C"/>
    <property type="match status" value="1"/>
</dbReference>
<dbReference type="Pfam" id="PF07991">
    <property type="entry name" value="KARI_N"/>
    <property type="match status" value="1"/>
</dbReference>
<dbReference type="PIRSF" id="PIRSF000116">
    <property type="entry name" value="IlvC_gammaproteo"/>
    <property type="match status" value="1"/>
</dbReference>
<dbReference type="SUPFAM" id="SSF48179">
    <property type="entry name" value="6-phosphogluconate dehydrogenase C-terminal domain-like"/>
    <property type="match status" value="1"/>
</dbReference>
<dbReference type="SUPFAM" id="SSF51735">
    <property type="entry name" value="NAD(P)-binding Rossmann-fold domains"/>
    <property type="match status" value="1"/>
</dbReference>
<dbReference type="PROSITE" id="PS51851">
    <property type="entry name" value="KARI_C"/>
    <property type="match status" value="1"/>
</dbReference>
<dbReference type="PROSITE" id="PS51850">
    <property type="entry name" value="KARI_N"/>
    <property type="match status" value="1"/>
</dbReference>
<reference key="1">
    <citation type="journal article" date="2007" name="J. Bacteriol.">
        <title>Genome-wide transcriptional changes in Streptococcus gordonii in response to competence signaling peptide.</title>
        <authorList>
            <person name="Vickerman M.M."/>
            <person name="Iobst S."/>
            <person name="Jesionowski A.M."/>
            <person name="Gill S.R."/>
        </authorList>
    </citation>
    <scope>NUCLEOTIDE SEQUENCE [LARGE SCALE GENOMIC DNA]</scope>
    <source>
        <strain>Challis / ATCC 35105 / BCRC 15272 / CH1 / DL1 / V288</strain>
    </source>
</reference>
<keyword id="KW-0028">Amino-acid biosynthesis</keyword>
<keyword id="KW-0100">Branched-chain amino acid biosynthesis</keyword>
<keyword id="KW-0460">Magnesium</keyword>
<keyword id="KW-0479">Metal-binding</keyword>
<keyword id="KW-0521">NADP</keyword>
<keyword id="KW-0560">Oxidoreductase</keyword>
<keyword id="KW-1185">Reference proteome</keyword>
<organism>
    <name type="scientific">Streptococcus gordonii (strain Challis / ATCC 35105 / BCRC 15272 / CH1 / DL1 / V288)</name>
    <dbReference type="NCBI Taxonomy" id="467705"/>
    <lineage>
        <taxon>Bacteria</taxon>
        <taxon>Bacillati</taxon>
        <taxon>Bacillota</taxon>
        <taxon>Bacilli</taxon>
        <taxon>Lactobacillales</taxon>
        <taxon>Streptococcaceae</taxon>
        <taxon>Streptococcus</taxon>
    </lineage>
</organism>
<proteinExistence type="inferred from homology"/>
<sequence>MAVQMEYEKDVKVAALDGKKIAVIGYGSQGHAHAQNLRDTGHDVIIGVRPGKSFDKAKEDGFDTYTVAEAAKLADVIMILAPDEIQQELYEAEIAPNLEAGNAVGFAHGFNIHFEFIKVPADVDVFMCAPKGPGHLVRRTFEEGFGVPALYAVYQDATGNAKNIAMDWCKGVGAARVGLLETTYKEETEEDLFGEQAVLCGGLTALIEAGFEVLTEAGYAPELAYFEVLHEMKLIVDLIYEGGFKKMRQSISNTAEYGDYVSGPRVITEQVKENMKAVLADIQNGKFANDFVNDYKAGRPKLTAYREQAANLEIEKVGAELRKAMPFVGKNDDDAFKIYN</sequence>
<protein>
    <recommendedName>
        <fullName evidence="1">Ketol-acid reductoisomerase (NADP(+))</fullName>
        <shortName evidence="1">KARI</shortName>
        <ecNumber evidence="1">1.1.1.86</ecNumber>
    </recommendedName>
    <alternativeName>
        <fullName evidence="1">Acetohydroxy-acid isomeroreductase</fullName>
        <shortName evidence="1">AHIR</shortName>
    </alternativeName>
    <alternativeName>
        <fullName evidence="1">Alpha-keto-beta-hydroxylacyl reductoisomerase</fullName>
    </alternativeName>
    <alternativeName>
        <fullName evidence="1">Ketol-acid reductoisomerase type 1</fullName>
    </alternativeName>
    <alternativeName>
        <fullName evidence="1">Ketol-acid reductoisomerase type I</fullName>
    </alternativeName>
</protein>
<accession>A8AVN4</accession>
<name>ILVC_STRGC</name>